<feature type="chain" id="PRO_0000269801" description="Pyridoxal kinase PdxY">
    <location>
        <begin position="1"/>
        <end position="287"/>
    </location>
</feature>
<feature type="binding site" evidence="1">
    <location>
        <position position="9"/>
    </location>
    <ligand>
        <name>substrate</name>
    </ligand>
</feature>
<feature type="binding site" evidence="1">
    <location>
        <begin position="44"/>
        <end position="45"/>
    </location>
    <ligand>
        <name>substrate</name>
    </ligand>
</feature>
<feature type="binding site" evidence="1">
    <location>
        <position position="111"/>
    </location>
    <ligand>
        <name>ATP</name>
        <dbReference type="ChEBI" id="CHEBI:30616"/>
    </ligand>
</feature>
<feature type="binding site" evidence="1">
    <location>
        <position position="142"/>
    </location>
    <ligand>
        <name>ATP</name>
        <dbReference type="ChEBI" id="CHEBI:30616"/>
    </ligand>
</feature>
<feature type="binding site" evidence="1">
    <location>
        <position position="147"/>
    </location>
    <ligand>
        <name>ATP</name>
        <dbReference type="ChEBI" id="CHEBI:30616"/>
    </ligand>
</feature>
<feature type="binding site" evidence="1">
    <location>
        <position position="180"/>
    </location>
    <ligand>
        <name>ATP</name>
        <dbReference type="ChEBI" id="CHEBI:30616"/>
    </ligand>
</feature>
<feature type="binding site" evidence="1">
    <location>
        <position position="221"/>
    </location>
    <ligand>
        <name>substrate</name>
    </ligand>
</feature>
<sequence>MKNVLSIQSHVIYGHAGNSAAVFPMQRLGVNVWPLNTVQLSNHMQYGHWAGSAIDAAKMEQLVDGIAAIGALKRCDAVLSGFLGSPAQARAAVEIVRTVKATNPNAWYFCDPAMGQTGGIRPEPGVEEFIVAELPELADGMAPNHGELQKLAGQRIETVAEAVEACRSIIRRGPRLILVKHLHDRNSPADRFNMLVVTETEAWIGQRPLYAFPRHPVGVGDLTSAIFVARRLRGDSVRAAFEHTLAAVHAVVKATYDARRYELELVAAQDEIAQPSEWFGAWVTGAD</sequence>
<protein>
    <recommendedName>
        <fullName evidence="1">Pyridoxal kinase PdxY</fullName>
        <shortName evidence="1">PL kinase</shortName>
        <ecNumber evidence="1">2.7.1.35</ecNumber>
    </recommendedName>
</protein>
<keyword id="KW-0067">ATP-binding</keyword>
<keyword id="KW-0418">Kinase</keyword>
<keyword id="KW-0460">Magnesium</keyword>
<keyword id="KW-0547">Nucleotide-binding</keyword>
<keyword id="KW-0808">Transferase</keyword>
<organism>
    <name type="scientific">Burkholderia thailandensis (strain ATCC 700388 / DSM 13276 / CCUG 48851 / CIP 106301 / E264)</name>
    <dbReference type="NCBI Taxonomy" id="271848"/>
    <lineage>
        <taxon>Bacteria</taxon>
        <taxon>Pseudomonadati</taxon>
        <taxon>Pseudomonadota</taxon>
        <taxon>Betaproteobacteria</taxon>
        <taxon>Burkholderiales</taxon>
        <taxon>Burkholderiaceae</taxon>
        <taxon>Burkholderia</taxon>
        <taxon>pseudomallei group</taxon>
    </lineage>
</organism>
<reference key="1">
    <citation type="journal article" date="2005" name="BMC Genomics">
        <title>Bacterial genome adaptation to niches: divergence of the potential virulence genes in three Burkholderia species of different survival strategies.</title>
        <authorList>
            <person name="Kim H.S."/>
            <person name="Schell M.A."/>
            <person name="Yu Y."/>
            <person name="Ulrich R.L."/>
            <person name="Sarria S.H."/>
            <person name="Nierman W.C."/>
            <person name="DeShazer D."/>
        </authorList>
    </citation>
    <scope>NUCLEOTIDE SEQUENCE [LARGE SCALE GENOMIC DNA]</scope>
    <source>
        <strain>ATCC 700388 / DSM 13276 / CCUG 48851 / CIP 106301 / E264</strain>
    </source>
</reference>
<comment type="function">
    <text evidence="1">Pyridoxal kinase involved in the salvage pathway of pyridoxal 5'-phosphate (PLP). Catalyzes the phosphorylation of pyridoxal to PLP.</text>
</comment>
<comment type="catalytic activity">
    <reaction evidence="1">
        <text>pyridoxal + ATP = pyridoxal 5'-phosphate + ADP + H(+)</text>
        <dbReference type="Rhea" id="RHEA:10224"/>
        <dbReference type="ChEBI" id="CHEBI:15378"/>
        <dbReference type="ChEBI" id="CHEBI:17310"/>
        <dbReference type="ChEBI" id="CHEBI:30616"/>
        <dbReference type="ChEBI" id="CHEBI:456216"/>
        <dbReference type="ChEBI" id="CHEBI:597326"/>
        <dbReference type="EC" id="2.7.1.35"/>
    </reaction>
</comment>
<comment type="cofactor">
    <cofactor evidence="1">
        <name>Mg(2+)</name>
        <dbReference type="ChEBI" id="CHEBI:18420"/>
    </cofactor>
</comment>
<comment type="pathway">
    <text evidence="1">Cofactor metabolism; pyridoxal 5'-phosphate salvage; pyridoxal 5'-phosphate from pyridoxal: step 1/1.</text>
</comment>
<comment type="subunit">
    <text evidence="1">Homodimer.</text>
</comment>
<comment type="similarity">
    <text evidence="1">Belongs to the pyridoxine kinase family. PdxY subfamily.</text>
</comment>
<comment type="sequence caution" evidence="2">
    <conflict type="erroneous initiation">
        <sequence resource="EMBL-CDS" id="ABC37853"/>
    </conflict>
</comment>
<evidence type="ECO:0000255" key="1">
    <source>
        <dbReference type="HAMAP-Rule" id="MF_01639"/>
    </source>
</evidence>
<evidence type="ECO:0000305" key="2"/>
<proteinExistence type="inferred from homology"/>
<name>PDXY_BURTA</name>
<accession>Q2SXQ4</accession>
<gene>
    <name evidence="1" type="primary">pdxY</name>
    <name type="ordered locus">BTH_I1763</name>
</gene>
<dbReference type="EC" id="2.7.1.35" evidence="1"/>
<dbReference type="EMBL" id="CP000086">
    <property type="protein sequence ID" value="ABC37853.1"/>
    <property type="status" value="ALT_INIT"/>
    <property type="molecule type" value="Genomic_DNA"/>
</dbReference>
<dbReference type="RefSeq" id="WP_009890048.1">
    <property type="nucleotide sequence ID" value="NZ_CP008785.1"/>
</dbReference>
<dbReference type="SMR" id="Q2SXQ4"/>
<dbReference type="GeneID" id="45121492"/>
<dbReference type="KEGG" id="bte:BTH_I1763"/>
<dbReference type="HOGENOM" id="CLU_046496_3_0_4"/>
<dbReference type="UniPathway" id="UPA01068">
    <property type="reaction ID" value="UER00298"/>
</dbReference>
<dbReference type="Proteomes" id="UP000001930">
    <property type="component" value="Chromosome I"/>
</dbReference>
<dbReference type="GO" id="GO:0005829">
    <property type="term" value="C:cytosol"/>
    <property type="evidence" value="ECO:0007669"/>
    <property type="project" value="TreeGrafter"/>
</dbReference>
<dbReference type="GO" id="GO:0005524">
    <property type="term" value="F:ATP binding"/>
    <property type="evidence" value="ECO:0007669"/>
    <property type="project" value="UniProtKB-UniRule"/>
</dbReference>
<dbReference type="GO" id="GO:0000287">
    <property type="term" value="F:magnesium ion binding"/>
    <property type="evidence" value="ECO:0007669"/>
    <property type="project" value="UniProtKB-UniRule"/>
</dbReference>
<dbReference type="GO" id="GO:0008478">
    <property type="term" value="F:pyridoxal kinase activity"/>
    <property type="evidence" value="ECO:0007669"/>
    <property type="project" value="UniProtKB-UniRule"/>
</dbReference>
<dbReference type="GO" id="GO:0009443">
    <property type="term" value="P:pyridoxal 5'-phosphate salvage"/>
    <property type="evidence" value="ECO:0007669"/>
    <property type="project" value="UniProtKB-UniRule"/>
</dbReference>
<dbReference type="CDD" id="cd01173">
    <property type="entry name" value="pyridoxal_pyridoxamine_kinase"/>
    <property type="match status" value="1"/>
</dbReference>
<dbReference type="FunFam" id="3.40.1190.20:FF:000008">
    <property type="entry name" value="Pyridoxal kinase PdxY"/>
    <property type="match status" value="1"/>
</dbReference>
<dbReference type="Gene3D" id="3.40.1190.20">
    <property type="match status" value="1"/>
</dbReference>
<dbReference type="HAMAP" id="MF_01639">
    <property type="entry name" value="PdxY"/>
    <property type="match status" value="1"/>
</dbReference>
<dbReference type="InterPro" id="IPR013749">
    <property type="entry name" value="PM/HMP-P_kinase-1"/>
</dbReference>
<dbReference type="InterPro" id="IPR004625">
    <property type="entry name" value="PyrdxlKinase"/>
</dbReference>
<dbReference type="InterPro" id="IPR023685">
    <property type="entry name" value="Pyridoxal_kinase_PdxY"/>
</dbReference>
<dbReference type="InterPro" id="IPR029056">
    <property type="entry name" value="Ribokinase-like"/>
</dbReference>
<dbReference type="NCBIfam" id="NF004398">
    <property type="entry name" value="PRK05756.1"/>
    <property type="match status" value="1"/>
</dbReference>
<dbReference type="NCBIfam" id="TIGR00687">
    <property type="entry name" value="pyridox_kin"/>
    <property type="match status" value="1"/>
</dbReference>
<dbReference type="PANTHER" id="PTHR10534">
    <property type="entry name" value="PYRIDOXAL KINASE"/>
    <property type="match status" value="1"/>
</dbReference>
<dbReference type="PANTHER" id="PTHR10534:SF2">
    <property type="entry name" value="PYRIDOXAL KINASE"/>
    <property type="match status" value="1"/>
</dbReference>
<dbReference type="Pfam" id="PF08543">
    <property type="entry name" value="Phos_pyr_kin"/>
    <property type="match status" value="1"/>
</dbReference>
<dbReference type="SUPFAM" id="SSF53613">
    <property type="entry name" value="Ribokinase-like"/>
    <property type="match status" value="1"/>
</dbReference>